<gene>
    <name evidence="1" type="primary">glpG</name>
    <name type="ordered locus">ECS88_3813</name>
</gene>
<sequence length="276" mass="31307">MLMITSFANPRVAQAFVDYMATQGVILTIQQHNQSDVWLADESQAERVRAELARFLENPADPRYLAASWQAGHTGSGLHYRRYPFFAALRERAGPVTWVMMIACVVVFIAMQILGDQEVMLWLAWPFDPTLKFEFWRYFTHALMHFSLMHILFNLLWWWYLGGAVEKRLGSGKLIVITLISALLSGYVQQKFSGPWFGGLSGVVYALMGYVWLRGERDPQSGIYLQRGLIIFALIWIVAGWFDLFGMSMANGAHIAGLAVGLAMAFVDSLNARKRK</sequence>
<name>GLPG_ECO45</name>
<organism>
    <name type="scientific">Escherichia coli O45:K1 (strain S88 / ExPEC)</name>
    <dbReference type="NCBI Taxonomy" id="585035"/>
    <lineage>
        <taxon>Bacteria</taxon>
        <taxon>Pseudomonadati</taxon>
        <taxon>Pseudomonadota</taxon>
        <taxon>Gammaproteobacteria</taxon>
        <taxon>Enterobacterales</taxon>
        <taxon>Enterobacteriaceae</taxon>
        <taxon>Escherichia</taxon>
    </lineage>
</organism>
<reference key="1">
    <citation type="journal article" date="2009" name="PLoS Genet.">
        <title>Organised genome dynamics in the Escherichia coli species results in highly diverse adaptive paths.</title>
        <authorList>
            <person name="Touchon M."/>
            <person name="Hoede C."/>
            <person name="Tenaillon O."/>
            <person name="Barbe V."/>
            <person name="Baeriswyl S."/>
            <person name="Bidet P."/>
            <person name="Bingen E."/>
            <person name="Bonacorsi S."/>
            <person name="Bouchier C."/>
            <person name="Bouvet O."/>
            <person name="Calteau A."/>
            <person name="Chiapello H."/>
            <person name="Clermont O."/>
            <person name="Cruveiller S."/>
            <person name="Danchin A."/>
            <person name="Diard M."/>
            <person name="Dossat C."/>
            <person name="Karoui M.E."/>
            <person name="Frapy E."/>
            <person name="Garry L."/>
            <person name="Ghigo J.M."/>
            <person name="Gilles A.M."/>
            <person name="Johnson J."/>
            <person name="Le Bouguenec C."/>
            <person name="Lescat M."/>
            <person name="Mangenot S."/>
            <person name="Martinez-Jehanne V."/>
            <person name="Matic I."/>
            <person name="Nassif X."/>
            <person name="Oztas S."/>
            <person name="Petit M.A."/>
            <person name="Pichon C."/>
            <person name="Rouy Z."/>
            <person name="Ruf C.S."/>
            <person name="Schneider D."/>
            <person name="Tourret J."/>
            <person name="Vacherie B."/>
            <person name="Vallenet D."/>
            <person name="Medigue C."/>
            <person name="Rocha E.P.C."/>
            <person name="Denamur E."/>
        </authorList>
    </citation>
    <scope>NUCLEOTIDE SEQUENCE [LARGE SCALE GENOMIC DNA]</scope>
    <source>
        <strain>S88 / ExPEC</strain>
    </source>
</reference>
<dbReference type="EC" id="3.4.21.105" evidence="1"/>
<dbReference type="EMBL" id="CU928161">
    <property type="protein sequence ID" value="CAR05025.1"/>
    <property type="molecule type" value="Genomic_DNA"/>
</dbReference>
<dbReference type="RefSeq" id="WP_000928723.1">
    <property type="nucleotide sequence ID" value="NC_011742.1"/>
</dbReference>
<dbReference type="SMR" id="B7MDQ0"/>
<dbReference type="MEROPS" id="S54.016"/>
<dbReference type="GeneID" id="86862178"/>
<dbReference type="KEGG" id="ecz:ECS88_3813"/>
<dbReference type="HOGENOM" id="CLU_058989_0_0_6"/>
<dbReference type="Proteomes" id="UP000000747">
    <property type="component" value="Chromosome"/>
</dbReference>
<dbReference type="GO" id="GO:0005886">
    <property type="term" value="C:plasma membrane"/>
    <property type="evidence" value="ECO:0007669"/>
    <property type="project" value="UniProtKB-SubCell"/>
</dbReference>
<dbReference type="GO" id="GO:0004252">
    <property type="term" value="F:serine-type endopeptidase activity"/>
    <property type="evidence" value="ECO:0007669"/>
    <property type="project" value="UniProtKB-UniRule"/>
</dbReference>
<dbReference type="GO" id="GO:0006508">
    <property type="term" value="P:proteolysis"/>
    <property type="evidence" value="ECO:0007669"/>
    <property type="project" value="UniProtKB-UniRule"/>
</dbReference>
<dbReference type="FunFam" id="1.20.1540.10:FF:000003">
    <property type="entry name" value="Rhomboid protease GlpG"/>
    <property type="match status" value="1"/>
</dbReference>
<dbReference type="FunFam" id="3.30.70.2350:FF:000001">
    <property type="entry name" value="Rhomboid protease GlpG"/>
    <property type="match status" value="1"/>
</dbReference>
<dbReference type="Gene3D" id="3.30.70.2350">
    <property type="match status" value="1"/>
</dbReference>
<dbReference type="Gene3D" id="1.20.1540.10">
    <property type="entry name" value="Rhomboid-like"/>
    <property type="match status" value="1"/>
</dbReference>
<dbReference type="HAMAP" id="MF_01594">
    <property type="entry name" value="Rhomboid_GlpG"/>
    <property type="match status" value="1"/>
</dbReference>
<dbReference type="InterPro" id="IPR038236">
    <property type="entry name" value="GlpG_N_sf"/>
</dbReference>
<dbReference type="InterPro" id="IPR022732">
    <property type="entry name" value="Peptidase_S54_GlpG_N"/>
</dbReference>
<dbReference type="InterPro" id="IPR022764">
    <property type="entry name" value="Peptidase_S54_rhomboid_dom"/>
</dbReference>
<dbReference type="InterPro" id="IPR035952">
    <property type="entry name" value="Rhomboid-like_sf"/>
</dbReference>
<dbReference type="InterPro" id="IPR023662">
    <property type="entry name" value="Rhomboid_protease_GlpG"/>
</dbReference>
<dbReference type="NCBIfam" id="NF008155">
    <property type="entry name" value="PRK10907.1"/>
    <property type="match status" value="1"/>
</dbReference>
<dbReference type="NCBIfam" id="TIGR04239">
    <property type="entry name" value="rhombo_GlpG"/>
    <property type="match status" value="1"/>
</dbReference>
<dbReference type="PANTHER" id="PTHR43066:SF26">
    <property type="entry name" value="RHOMBOID PROTEASE GLPG"/>
    <property type="match status" value="1"/>
</dbReference>
<dbReference type="PANTHER" id="PTHR43066">
    <property type="entry name" value="RHOMBOID-RELATED PROTEIN"/>
    <property type="match status" value="1"/>
</dbReference>
<dbReference type="Pfam" id="PF01694">
    <property type="entry name" value="Rhomboid"/>
    <property type="match status" value="1"/>
</dbReference>
<dbReference type="Pfam" id="PF12122">
    <property type="entry name" value="Rhomboid_N"/>
    <property type="match status" value="1"/>
</dbReference>
<dbReference type="SUPFAM" id="SSF144091">
    <property type="entry name" value="Rhomboid-like"/>
    <property type="match status" value="1"/>
</dbReference>
<keyword id="KW-0997">Cell inner membrane</keyword>
<keyword id="KW-1003">Cell membrane</keyword>
<keyword id="KW-0378">Hydrolase</keyword>
<keyword id="KW-0472">Membrane</keyword>
<keyword id="KW-0645">Protease</keyword>
<keyword id="KW-1185">Reference proteome</keyword>
<keyword id="KW-0720">Serine protease</keyword>
<keyword id="KW-0812">Transmembrane</keyword>
<keyword id="KW-1133">Transmembrane helix</keyword>
<evidence type="ECO:0000255" key="1">
    <source>
        <dbReference type="HAMAP-Rule" id="MF_01594"/>
    </source>
</evidence>
<feature type="chain" id="PRO_1000147852" description="Rhomboid protease GlpG">
    <location>
        <begin position="1"/>
        <end position="276"/>
    </location>
</feature>
<feature type="transmembrane region" description="Helical" evidence="1">
    <location>
        <begin position="94"/>
        <end position="114"/>
    </location>
</feature>
<feature type="transmembrane region" description="Helical" evidence="1">
    <location>
        <begin position="142"/>
        <end position="162"/>
    </location>
</feature>
<feature type="transmembrane region" description="Helical" evidence="1">
    <location>
        <begin position="169"/>
        <end position="189"/>
    </location>
</feature>
<feature type="transmembrane region" description="Helical" evidence="1">
    <location>
        <begin position="192"/>
        <end position="212"/>
    </location>
</feature>
<feature type="transmembrane region" description="Helical" evidence="1">
    <location>
        <begin position="229"/>
        <end position="249"/>
    </location>
</feature>
<feature type="transmembrane region" description="Helical" evidence="1">
    <location>
        <begin position="250"/>
        <end position="270"/>
    </location>
</feature>
<feature type="active site" description="Nucleophile" evidence="1">
    <location>
        <position position="201"/>
    </location>
</feature>
<feature type="active site" evidence="1">
    <location>
        <position position="254"/>
    </location>
</feature>
<proteinExistence type="inferred from homology"/>
<accession>B7MDQ0</accession>
<comment type="function">
    <text evidence="1">Rhomboid-type serine protease that catalyzes intramembrane proteolysis.</text>
</comment>
<comment type="catalytic activity">
    <reaction evidence="1">
        <text>Cleaves type-1 transmembrane domains using a catalytic dyad composed of serine and histidine that are contributed by different transmembrane domains.</text>
        <dbReference type="EC" id="3.4.21.105"/>
    </reaction>
</comment>
<comment type="subcellular location">
    <subcellularLocation>
        <location evidence="1">Cell inner membrane</location>
        <topology evidence="1">Multi-pass membrane protein</topology>
    </subcellularLocation>
</comment>
<comment type="similarity">
    <text evidence="1">Belongs to the peptidase S54 family.</text>
</comment>
<protein>
    <recommendedName>
        <fullName evidence="1">Rhomboid protease GlpG</fullName>
        <ecNumber evidence="1">3.4.21.105</ecNumber>
    </recommendedName>
    <alternativeName>
        <fullName evidence="1">Intramembrane serine protease</fullName>
    </alternativeName>
</protein>